<protein>
    <recommendedName>
        <fullName evidence="1">GMP reductase</fullName>
        <ecNumber evidence="1">1.7.1.7</ecNumber>
    </recommendedName>
    <alternativeName>
        <fullName evidence="1">Guanosine 5'-monophosphate oxidoreductase</fullName>
        <shortName evidence="1">Guanosine monophosphate reductase</shortName>
    </alternativeName>
</protein>
<evidence type="ECO:0000255" key="1">
    <source>
        <dbReference type="HAMAP-Rule" id="MF_00596"/>
    </source>
</evidence>
<reference key="1">
    <citation type="journal article" date="2002" name="Science">
        <title>50 million years of genomic stasis in endosymbiotic bacteria.</title>
        <authorList>
            <person name="Tamas I."/>
            <person name="Klasson L."/>
            <person name="Canbaeck B."/>
            <person name="Naeslund A.K."/>
            <person name="Eriksson A.-S."/>
            <person name="Wernegreen J.J."/>
            <person name="Sandstroem J.P."/>
            <person name="Moran N.A."/>
            <person name="Andersson S.G.E."/>
        </authorList>
    </citation>
    <scope>NUCLEOTIDE SEQUENCE [LARGE SCALE GENOMIC DNA]</scope>
    <source>
        <strain>Sg</strain>
    </source>
</reference>
<keyword id="KW-0479">Metal-binding</keyword>
<keyword id="KW-0521">NADP</keyword>
<keyword id="KW-0560">Oxidoreductase</keyword>
<keyword id="KW-0630">Potassium</keyword>
<sequence>MRIEEDIKLGFKDVLIRPKRSTLKSRSEVNLIRCFSFKYSTMKWFGIPLIAANMDTIGTFRMAEALSKFNILTAVHKYYSFDEWKNFISVSSKEILEHVIVSIGTSNLDFFKIKKIFSLSSELKYICIDVANGYSEHFVSFLKKIRSFFPDKIICAGNVVTGEMVEELILSGADIVKVGIGPGSVCTTRLKTGIGYPQLSAIIECADAAHGLNGQIISDGGCTVSGDIAKAFGGGADFVMLGGMFAGHTECLGEIIQEKSKKFMLFYGMSSTSAMKRYTGKIPGYRASEGKIVKIPFRGNVDVTVRDILGGLRSSCTYVGAQKLKELTKRTTFIRVSEQENCIFNNFKN</sequence>
<name>GUAC_BUCAP</name>
<feature type="chain" id="PRO_0000093733" description="GMP reductase">
    <location>
        <begin position="1"/>
        <end position="349"/>
    </location>
</feature>
<feature type="active site" description="Thioimidate intermediate" evidence="1">
    <location>
        <position position="186"/>
    </location>
</feature>
<feature type="binding site" evidence="1">
    <location>
        <begin position="108"/>
        <end position="131"/>
    </location>
    <ligand>
        <name>NADP(+)</name>
        <dbReference type="ChEBI" id="CHEBI:58349"/>
    </ligand>
</feature>
<feature type="binding site" evidence="1">
    <location>
        <position position="181"/>
    </location>
    <ligand>
        <name>K(+)</name>
        <dbReference type="ChEBI" id="CHEBI:29103"/>
    </ligand>
</feature>
<feature type="binding site" evidence="1">
    <location>
        <position position="183"/>
    </location>
    <ligand>
        <name>K(+)</name>
        <dbReference type="ChEBI" id="CHEBI:29103"/>
    </ligand>
</feature>
<feature type="binding site" evidence="1">
    <location>
        <begin position="216"/>
        <end position="239"/>
    </location>
    <ligand>
        <name>NADP(+)</name>
        <dbReference type="ChEBI" id="CHEBI:58349"/>
    </ligand>
</feature>
<comment type="function">
    <text evidence="1">Catalyzes the irreversible NADPH-dependent deamination of GMP to IMP. It functions in the conversion of nucleobase, nucleoside and nucleotide derivatives of G to A nucleotides, and in maintaining the intracellular balance of A and G nucleotides.</text>
</comment>
<comment type="catalytic activity">
    <reaction evidence="1">
        <text>IMP + NH4(+) + NADP(+) = GMP + NADPH + 2 H(+)</text>
        <dbReference type="Rhea" id="RHEA:17185"/>
        <dbReference type="ChEBI" id="CHEBI:15378"/>
        <dbReference type="ChEBI" id="CHEBI:28938"/>
        <dbReference type="ChEBI" id="CHEBI:57783"/>
        <dbReference type="ChEBI" id="CHEBI:58053"/>
        <dbReference type="ChEBI" id="CHEBI:58115"/>
        <dbReference type="ChEBI" id="CHEBI:58349"/>
        <dbReference type="EC" id="1.7.1.7"/>
    </reaction>
</comment>
<comment type="subunit">
    <text evidence="1">Homotetramer.</text>
</comment>
<comment type="similarity">
    <text evidence="1">Belongs to the IMPDH/GMPR family. GuaC type 1 subfamily.</text>
</comment>
<dbReference type="EC" id="1.7.1.7" evidence="1"/>
<dbReference type="EMBL" id="AE013218">
    <property type="protein sequence ID" value="AAM67762.1"/>
    <property type="molecule type" value="Genomic_DNA"/>
</dbReference>
<dbReference type="RefSeq" id="WP_011053729.1">
    <property type="nucleotide sequence ID" value="NC_004061.1"/>
</dbReference>
<dbReference type="SMR" id="Q8K9U0"/>
<dbReference type="STRING" id="198804.BUsg_198"/>
<dbReference type="GeneID" id="93003665"/>
<dbReference type="KEGG" id="bas:BUsg_198"/>
<dbReference type="eggNOG" id="COG0516">
    <property type="taxonomic scope" value="Bacteria"/>
</dbReference>
<dbReference type="HOGENOM" id="CLU_022552_5_3_6"/>
<dbReference type="Proteomes" id="UP000000416">
    <property type="component" value="Chromosome"/>
</dbReference>
<dbReference type="GO" id="GO:0005829">
    <property type="term" value="C:cytosol"/>
    <property type="evidence" value="ECO:0007669"/>
    <property type="project" value="TreeGrafter"/>
</dbReference>
<dbReference type="GO" id="GO:1902560">
    <property type="term" value="C:GMP reductase complex"/>
    <property type="evidence" value="ECO:0007669"/>
    <property type="project" value="InterPro"/>
</dbReference>
<dbReference type="GO" id="GO:0003920">
    <property type="term" value="F:GMP reductase activity"/>
    <property type="evidence" value="ECO:0007669"/>
    <property type="project" value="UniProtKB-UniRule"/>
</dbReference>
<dbReference type="GO" id="GO:0046872">
    <property type="term" value="F:metal ion binding"/>
    <property type="evidence" value="ECO:0007669"/>
    <property type="project" value="UniProtKB-KW"/>
</dbReference>
<dbReference type="GO" id="GO:0006163">
    <property type="term" value="P:purine nucleotide metabolic process"/>
    <property type="evidence" value="ECO:0007669"/>
    <property type="project" value="UniProtKB-UniRule"/>
</dbReference>
<dbReference type="CDD" id="cd00381">
    <property type="entry name" value="IMPDH"/>
    <property type="match status" value="1"/>
</dbReference>
<dbReference type="FunFam" id="3.20.20.70:FF:000012">
    <property type="entry name" value="GMP reductase"/>
    <property type="match status" value="1"/>
</dbReference>
<dbReference type="Gene3D" id="3.20.20.70">
    <property type="entry name" value="Aldolase class I"/>
    <property type="match status" value="1"/>
</dbReference>
<dbReference type="HAMAP" id="MF_00596">
    <property type="entry name" value="GMP_reduct_type1"/>
    <property type="match status" value="1"/>
</dbReference>
<dbReference type="InterPro" id="IPR013785">
    <property type="entry name" value="Aldolase_TIM"/>
</dbReference>
<dbReference type="InterPro" id="IPR050139">
    <property type="entry name" value="GMP_reductase"/>
</dbReference>
<dbReference type="InterPro" id="IPR005993">
    <property type="entry name" value="GMPR"/>
</dbReference>
<dbReference type="InterPro" id="IPR015875">
    <property type="entry name" value="IMP_DH/GMP_Rdtase_CS"/>
</dbReference>
<dbReference type="InterPro" id="IPR001093">
    <property type="entry name" value="IMP_DH_GMPRt"/>
</dbReference>
<dbReference type="NCBIfam" id="TIGR01305">
    <property type="entry name" value="GMP_reduct_1"/>
    <property type="match status" value="1"/>
</dbReference>
<dbReference type="NCBIfam" id="NF003470">
    <property type="entry name" value="PRK05096.1"/>
    <property type="match status" value="1"/>
</dbReference>
<dbReference type="PANTHER" id="PTHR43170">
    <property type="entry name" value="GMP REDUCTASE"/>
    <property type="match status" value="1"/>
</dbReference>
<dbReference type="PANTHER" id="PTHR43170:SF5">
    <property type="entry name" value="GMP REDUCTASE"/>
    <property type="match status" value="1"/>
</dbReference>
<dbReference type="Pfam" id="PF00478">
    <property type="entry name" value="IMPDH"/>
    <property type="match status" value="1"/>
</dbReference>
<dbReference type="PIRSF" id="PIRSF000235">
    <property type="entry name" value="GMP_reductase"/>
    <property type="match status" value="1"/>
</dbReference>
<dbReference type="SMART" id="SM01240">
    <property type="entry name" value="IMPDH"/>
    <property type="match status" value="1"/>
</dbReference>
<dbReference type="SUPFAM" id="SSF51412">
    <property type="entry name" value="Inosine monophosphate dehydrogenase (IMPDH)"/>
    <property type="match status" value="1"/>
</dbReference>
<dbReference type="PROSITE" id="PS00487">
    <property type="entry name" value="IMP_DH_GMP_RED"/>
    <property type="match status" value="1"/>
</dbReference>
<gene>
    <name evidence="1" type="primary">guaC</name>
    <name type="ordered locus">BUsg_198</name>
</gene>
<organism>
    <name type="scientific">Buchnera aphidicola subsp. Schizaphis graminum (strain Sg)</name>
    <dbReference type="NCBI Taxonomy" id="198804"/>
    <lineage>
        <taxon>Bacteria</taxon>
        <taxon>Pseudomonadati</taxon>
        <taxon>Pseudomonadota</taxon>
        <taxon>Gammaproteobacteria</taxon>
        <taxon>Enterobacterales</taxon>
        <taxon>Erwiniaceae</taxon>
        <taxon>Buchnera</taxon>
    </lineage>
</organism>
<proteinExistence type="inferred from homology"/>
<accession>Q8K9U0</accession>